<evidence type="ECO:0000255" key="1">
    <source>
        <dbReference type="HAMAP-Rule" id="MF_00423"/>
    </source>
</evidence>
<proteinExistence type="inferred from homology"/>
<name>SELA_PSEAB</name>
<reference key="1">
    <citation type="journal article" date="2006" name="Genome Biol.">
        <title>Genomic analysis reveals that Pseudomonas aeruginosa virulence is combinatorial.</title>
        <authorList>
            <person name="Lee D.G."/>
            <person name="Urbach J.M."/>
            <person name="Wu G."/>
            <person name="Liberati N.T."/>
            <person name="Feinbaum R.L."/>
            <person name="Miyata S."/>
            <person name="Diggins L.T."/>
            <person name="He J."/>
            <person name="Saucier M."/>
            <person name="Deziel E."/>
            <person name="Friedman L."/>
            <person name="Li L."/>
            <person name="Grills G."/>
            <person name="Montgomery K."/>
            <person name="Kucherlapati R."/>
            <person name="Rahme L.G."/>
            <person name="Ausubel F.M."/>
        </authorList>
    </citation>
    <scope>NUCLEOTIDE SEQUENCE [LARGE SCALE GENOMIC DNA]</scope>
    <source>
        <strain>UCBPP-PA14</strain>
    </source>
</reference>
<accession>Q02FL3</accession>
<feature type="chain" id="PRO_1000050375" description="L-seryl-tRNA(Sec) selenium transferase">
    <location>
        <begin position="1"/>
        <end position="468"/>
    </location>
</feature>
<feature type="modified residue" description="N6-(pyridoxal phosphate)lysine" evidence="1">
    <location>
        <position position="291"/>
    </location>
</feature>
<organism>
    <name type="scientific">Pseudomonas aeruginosa (strain UCBPP-PA14)</name>
    <dbReference type="NCBI Taxonomy" id="208963"/>
    <lineage>
        <taxon>Bacteria</taxon>
        <taxon>Pseudomonadati</taxon>
        <taxon>Pseudomonadota</taxon>
        <taxon>Gammaproteobacteria</taxon>
        <taxon>Pseudomonadales</taxon>
        <taxon>Pseudomonadaceae</taxon>
        <taxon>Pseudomonas</taxon>
    </lineage>
</organism>
<protein>
    <recommendedName>
        <fullName evidence="1">L-seryl-tRNA(Sec) selenium transferase</fullName>
        <ecNumber evidence="1">2.9.1.1</ecNumber>
    </recommendedName>
    <alternativeName>
        <fullName evidence="1">Selenocysteine synthase</fullName>
        <shortName evidence="1">Sec synthase</shortName>
    </alternativeName>
    <alternativeName>
        <fullName evidence="1">Selenocysteinyl-tRNA(Sec) synthase</fullName>
    </alternativeName>
</protein>
<dbReference type="EC" id="2.9.1.1" evidence="1"/>
<dbReference type="EMBL" id="CP000438">
    <property type="protein sequence ID" value="ABJ14192.1"/>
    <property type="molecule type" value="Genomic_DNA"/>
</dbReference>
<dbReference type="RefSeq" id="WP_004365409.1">
    <property type="nucleotide sequence ID" value="NZ_CP034244.1"/>
</dbReference>
<dbReference type="SMR" id="Q02FL3"/>
<dbReference type="KEGG" id="pau:PA14_63540"/>
<dbReference type="PseudoCAP" id="PA14_63540"/>
<dbReference type="HOGENOM" id="CLU_038142_1_0_6"/>
<dbReference type="BioCyc" id="PAER208963:G1G74-5377-MONOMER"/>
<dbReference type="UniPathway" id="UPA00906">
    <property type="reaction ID" value="UER00896"/>
</dbReference>
<dbReference type="Proteomes" id="UP000000653">
    <property type="component" value="Chromosome"/>
</dbReference>
<dbReference type="GO" id="GO:0005737">
    <property type="term" value="C:cytoplasm"/>
    <property type="evidence" value="ECO:0007669"/>
    <property type="project" value="UniProtKB-SubCell"/>
</dbReference>
<dbReference type="GO" id="GO:0004125">
    <property type="term" value="F:L-seryl-tRNA(Sec) selenium transferase activity"/>
    <property type="evidence" value="ECO:0007669"/>
    <property type="project" value="UniProtKB-UniRule"/>
</dbReference>
<dbReference type="GO" id="GO:0001717">
    <property type="term" value="P:conversion of seryl-tRNAsec to selenocys-tRNAsec"/>
    <property type="evidence" value="ECO:0007669"/>
    <property type="project" value="UniProtKB-UniRule"/>
</dbReference>
<dbReference type="GO" id="GO:0001514">
    <property type="term" value="P:selenocysteine incorporation"/>
    <property type="evidence" value="ECO:0007669"/>
    <property type="project" value="UniProtKB-UniRule"/>
</dbReference>
<dbReference type="FunFam" id="3.40.640.10:FF:000028">
    <property type="entry name" value="L-seryl-tRNA(Sec) selenium transferase"/>
    <property type="match status" value="1"/>
</dbReference>
<dbReference type="Gene3D" id="3.90.1150.180">
    <property type="match status" value="1"/>
</dbReference>
<dbReference type="Gene3D" id="3.40.640.10">
    <property type="entry name" value="Type I PLP-dependent aspartate aminotransferase-like (Major domain)"/>
    <property type="match status" value="1"/>
</dbReference>
<dbReference type="HAMAP" id="MF_00423">
    <property type="entry name" value="SelA"/>
    <property type="match status" value="1"/>
</dbReference>
<dbReference type="InterPro" id="IPR015424">
    <property type="entry name" value="PyrdxlP-dep_Trfase"/>
</dbReference>
<dbReference type="InterPro" id="IPR015421">
    <property type="entry name" value="PyrdxlP-dep_Trfase_major"/>
</dbReference>
<dbReference type="InterPro" id="IPR018319">
    <property type="entry name" value="SelA-like"/>
</dbReference>
<dbReference type="InterPro" id="IPR004534">
    <property type="entry name" value="SelA_trans"/>
</dbReference>
<dbReference type="InterPro" id="IPR025862">
    <property type="entry name" value="SelA_trans_N_dom"/>
</dbReference>
<dbReference type="NCBIfam" id="TIGR00474">
    <property type="entry name" value="selA"/>
    <property type="match status" value="1"/>
</dbReference>
<dbReference type="PANTHER" id="PTHR32328">
    <property type="entry name" value="L-SERYL-TRNA(SEC) SELENIUM TRANSFERASE"/>
    <property type="match status" value="1"/>
</dbReference>
<dbReference type="PANTHER" id="PTHR32328:SF0">
    <property type="entry name" value="L-SERYL-TRNA(SEC) SELENIUM TRANSFERASE"/>
    <property type="match status" value="1"/>
</dbReference>
<dbReference type="Pfam" id="PF12390">
    <property type="entry name" value="Se-cys_synth_N"/>
    <property type="match status" value="1"/>
</dbReference>
<dbReference type="Pfam" id="PF03841">
    <property type="entry name" value="SelA"/>
    <property type="match status" value="1"/>
</dbReference>
<dbReference type="SUPFAM" id="SSF53383">
    <property type="entry name" value="PLP-dependent transferases"/>
    <property type="match status" value="1"/>
</dbReference>
<gene>
    <name evidence="1" type="primary">selA</name>
    <name type="ordered locus">PA14_63540</name>
</gene>
<comment type="function">
    <text evidence="1">Converts seryl-tRNA(Sec) to selenocysteinyl-tRNA(Sec) required for selenoprotein biosynthesis.</text>
</comment>
<comment type="catalytic activity">
    <reaction evidence="1">
        <text>L-seryl-tRNA(Sec) + selenophosphate + H(+) = L-selenocysteinyl-tRNA(Sec) + phosphate</text>
        <dbReference type="Rhea" id="RHEA:22728"/>
        <dbReference type="Rhea" id="RHEA-COMP:9742"/>
        <dbReference type="Rhea" id="RHEA-COMP:9743"/>
        <dbReference type="ChEBI" id="CHEBI:15378"/>
        <dbReference type="ChEBI" id="CHEBI:16144"/>
        <dbReference type="ChEBI" id="CHEBI:43474"/>
        <dbReference type="ChEBI" id="CHEBI:78533"/>
        <dbReference type="ChEBI" id="CHEBI:78573"/>
        <dbReference type="EC" id="2.9.1.1"/>
    </reaction>
</comment>
<comment type="cofactor">
    <cofactor evidence="1">
        <name>pyridoxal 5'-phosphate</name>
        <dbReference type="ChEBI" id="CHEBI:597326"/>
    </cofactor>
</comment>
<comment type="pathway">
    <text evidence="1">Aminoacyl-tRNA biosynthesis; selenocysteinyl-tRNA(Sec) biosynthesis; selenocysteinyl-tRNA(Sec) from L-seryl-tRNA(Sec) (bacterial route): step 1/1.</text>
</comment>
<comment type="subcellular location">
    <subcellularLocation>
        <location evidence="1">Cytoplasm</location>
    </subcellularLocation>
</comment>
<comment type="similarity">
    <text evidence="1">Belongs to the SelA family.</text>
</comment>
<keyword id="KW-0963">Cytoplasm</keyword>
<keyword id="KW-0648">Protein biosynthesis</keyword>
<keyword id="KW-0663">Pyridoxal phosphate</keyword>
<keyword id="KW-0711">Selenium</keyword>
<keyword id="KW-0808">Transferase</keyword>
<sequence>MSSVRLPSVDRLLRSAAAAPLHQRYGREALLATLRDLLDELREPARHGALAEIELSEAVLAGRAGERLAAQHASRVRRVFNLTGTVLHTNLGRALLPDEAIEAITLAARYPLNLEFDLASGKRGDRDDLIAGLIRELTGAEAVTVVNNNAAAVLLALNSLGARKEGIISRGELIEIGGAFRIPDIMARAGVRLHEVGTTNRTHARDYEAAIGPRSGLLMRVHTSNYSVQGFTASVPTAQLAAIAHGHGLPLLEDLGSGTLVDLTRWGLPKEPTVQEALADGADIVTFSGDKLLGGPQAGLILGNRELIGRIKKNPLKRALRVDKLTLAALEAVLGLYRDPDRLAERLTTLRLLSRPAAEIRAQAERLAPALGEALGEGWEVAVVDALGMIGSGAQPVARLASAALCLRPRQPRRLRGRALRNLEEALRGLPLPVIGRLDDDALWLDLRQLDDEPAFLAQLPRLRSELS</sequence>